<proteinExistence type="inferred from homology"/>
<accession>Q24UI6</accession>
<evidence type="ECO:0000250" key="1"/>
<evidence type="ECO:0000255" key="2">
    <source>
        <dbReference type="HAMAP-Rule" id="MF_00100"/>
    </source>
</evidence>
<evidence type="ECO:0000256" key="3">
    <source>
        <dbReference type="SAM" id="MobiDB-lite"/>
    </source>
</evidence>
<sequence length="971" mass="106888">MSIRVHELAKELNLSSKEVMSRLESIGVDVKNHLSAVEDQDANRLRTRIQKPQGKEQAVEPRKSVPSQESKNLTQGPAEGNRDKSQGLQVESSRVEGEGRPQGQRPMGDRPQGQRPMGDRPQGQRPMGDRPQGQRPMGDRPQGQRPMGDRPQGQRPMGDRPQGQRPMGDRPQGQRPMGDRPQGQRPMGDRPQGQRPMGDRPQGQRPMGDRPQGQRPMGDRPQGQRPMGDRPQGQRPMGDRPQGQRPMGDRPQGQRPMGDRPQGQRPMGDRPQGQRPMGDRPQGQRPMGDRPQGQRPMGDRPQGQRPMGDRPQGQRPMGDRPQGQRPPQRPPATPGTPAVEQPPKRQIGEKKKPQDRNFERKKEMEKEIRAPRGNRRNVKAAPREIRDTAPKHIVIPESLTVQDLAAKMSRKSGEVIKKLMDMGVMATINQEIDSETAVIIAGEMGVTVEVKIEKPITVIEEIEDDPAELRSRPPVVTVMGHVDHGKTSLLDAIRTTKVTASEAGGITQHIGAYQVEINGQKITFLDTPGHEAFTAMRARGAQVTDIAILVVAADDGVMPQTVEAINHAKAADVPIIVAINKIDKEESNPDRVKQELTEYGLVVEEWGGDTIAVPVSAKARMNIEQLLEMVLLVAEIKELKANPNRSATGTVIEAELDKGKGPVATVLVSKGTLNVGDIILAGSSFGRIRAMVDDKGRRVKKAGPSTPVEVQGLNEVPKAGQVFNVVDDEKHARQIAEARANERKAEEVRQTTKVSLEDLFDRIKEGEVKELNVIIKADVQGSIEALKQSLLRLSTSEVRVNPIHGGVGAITETDIMLAAASNAIIIGFNVRPDANTKATAELQGVDMRLYRVIYDAIEDVKAAMTGMLDPDFKEVVQGRAEVRQVFKVPKVGTVGGSYVLNGKITRHSKIRVIRDGIVIHEGELESLRRFKDDAKEVVEGYECGIGVANFNDIKEGDIIEAFIMEEVKRQL</sequence>
<protein>
    <recommendedName>
        <fullName evidence="2">Translation initiation factor IF-2</fullName>
    </recommendedName>
</protein>
<gene>
    <name evidence="2" type="primary">infB</name>
    <name type="ordered locus">DSY2517</name>
</gene>
<comment type="function">
    <text evidence="2">One of the essential components for the initiation of protein synthesis. Protects formylmethionyl-tRNA from spontaneous hydrolysis and promotes its binding to the 30S ribosomal subunits. Also involved in the hydrolysis of GTP during the formation of the 70S ribosomal complex.</text>
</comment>
<comment type="subcellular location">
    <subcellularLocation>
        <location evidence="2">Cytoplasm</location>
    </subcellularLocation>
</comment>
<comment type="similarity">
    <text evidence="2">Belongs to the TRAFAC class translation factor GTPase superfamily. Classic translation factor GTPase family. IF-2 subfamily.</text>
</comment>
<keyword id="KW-0963">Cytoplasm</keyword>
<keyword id="KW-0342">GTP-binding</keyword>
<keyword id="KW-0396">Initiation factor</keyword>
<keyword id="KW-0547">Nucleotide-binding</keyword>
<keyword id="KW-0648">Protein biosynthesis</keyword>
<keyword id="KW-1185">Reference proteome</keyword>
<name>IF2_DESHY</name>
<organism>
    <name type="scientific">Desulfitobacterium hafniense (strain Y51)</name>
    <dbReference type="NCBI Taxonomy" id="138119"/>
    <lineage>
        <taxon>Bacteria</taxon>
        <taxon>Bacillati</taxon>
        <taxon>Bacillota</taxon>
        <taxon>Clostridia</taxon>
        <taxon>Eubacteriales</taxon>
        <taxon>Desulfitobacteriaceae</taxon>
        <taxon>Desulfitobacterium</taxon>
    </lineage>
</organism>
<reference key="1">
    <citation type="journal article" date="2006" name="J. Bacteriol.">
        <title>Complete genome sequence of the dehalorespiring bacterium Desulfitobacterium hafniense Y51 and comparison with Dehalococcoides ethenogenes 195.</title>
        <authorList>
            <person name="Nonaka H."/>
            <person name="Keresztes G."/>
            <person name="Shinoda Y."/>
            <person name="Ikenaga Y."/>
            <person name="Abe M."/>
            <person name="Naito K."/>
            <person name="Inatomi K."/>
            <person name="Furukawa K."/>
            <person name="Inui M."/>
            <person name="Yukawa H."/>
        </authorList>
    </citation>
    <scope>NUCLEOTIDE SEQUENCE [LARGE SCALE GENOMIC DNA]</scope>
    <source>
        <strain>Y51</strain>
    </source>
</reference>
<dbReference type="EMBL" id="AP008230">
    <property type="protein sequence ID" value="BAE84306.1"/>
    <property type="molecule type" value="Genomic_DNA"/>
</dbReference>
<dbReference type="RefSeq" id="WP_011460393.1">
    <property type="nucleotide sequence ID" value="NC_007907.1"/>
</dbReference>
<dbReference type="SMR" id="Q24UI6"/>
<dbReference type="STRING" id="138119.DSY2517"/>
<dbReference type="KEGG" id="dsy:DSY2517"/>
<dbReference type="eggNOG" id="COG0532">
    <property type="taxonomic scope" value="Bacteria"/>
</dbReference>
<dbReference type="HOGENOM" id="CLU_006301_5_1_9"/>
<dbReference type="Proteomes" id="UP000001946">
    <property type="component" value="Chromosome"/>
</dbReference>
<dbReference type="GO" id="GO:0005829">
    <property type="term" value="C:cytosol"/>
    <property type="evidence" value="ECO:0007669"/>
    <property type="project" value="TreeGrafter"/>
</dbReference>
<dbReference type="GO" id="GO:0005525">
    <property type="term" value="F:GTP binding"/>
    <property type="evidence" value="ECO:0007669"/>
    <property type="project" value="UniProtKB-KW"/>
</dbReference>
<dbReference type="GO" id="GO:0003924">
    <property type="term" value="F:GTPase activity"/>
    <property type="evidence" value="ECO:0007669"/>
    <property type="project" value="UniProtKB-UniRule"/>
</dbReference>
<dbReference type="GO" id="GO:0003743">
    <property type="term" value="F:translation initiation factor activity"/>
    <property type="evidence" value="ECO:0007669"/>
    <property type="project" value="UniProtKB-UniRule"/>
</dbReference>
<dbReference type="CDD" id="cd01887">
    <property type="entry name" value="IF2_eIF5B"/>
    <property type="match status" value="1"/>
</dbReference>
<dbReference type="CDD" id="cd03702">
    <property type="entry name" value="IF2_mtIF2_II"/>
    <property type="match status" value="1"/>
</dbReference>
<dbReference type="CDD" id="cd03692">
    <property type="entry name" value="mtIF2_IVc"/>
    <property type="match status" value="1"/>
</dbReference>
<dbReference type="FunFam" id="2.40.30.10:FF:000007">
    <property type="entry name" value="Translation initiation factor IF-2"/>
    <property type="match status" value="1"/>
</dbReference>
<dbReference type="FunFam" id="2.40.30.10:FF:000008">
    <property type="entry name" value="Translation initiation factor IF-2"/>
    <property type="match status" value="1"/>
</dbReference>
<dbReference type="FunFam" id="3.40.50.10050:FF:000001">
    <property type="entry name" value="Translation initiation factor IF-2"/>
    <property type="match status" value="1"/>
</dbReference>
<dbReference type="FunFam" id="3.40.50.300:FF:000019">
    <property type="entry name" value="Translation initiation factor IF-2"/>
    <property type="match status" value="1"/>
</dbReference>
<dbReference type="Gene3D" id="1.10.10.2480">
    <property type="match status" value="1"/>
</dbReference>
<dbReference type="Gene3D" id="3.40.50.300">
    <property type="entry name" value="P-loop containing nucleotide triphosphate hydrolases"/>
    <property type="match status" value="1"/>
</dbReference>
<dbReference type="Gene3D" id="2.40.30.10">
    <property type="entry name" value="Translation factors"/>
    <property type="match status" value="2"/>
</dbReference>
<dbReference type="Gene3D" id="3.40.50.10050">
    <property type="entry name" value="Translation initiation factor IF- 2, domain 3"/>
    <property type="match status" value="1"/>
</dbReference>
<dbReference type="HAMAP" id="MF_00100_B">
    <property type="entry name" value="IF_2_B"/>
    <property type="match status" value="1"/>
</dbReference>
<dbReference type="InterPro" id="IPR053905">
    <property type="entry name" value="EF-G-like_DII"/>
</dbReference>
<dbReference type="InterPro" id="IPR044145">
    <property type="entry name" value="IF2_II"/>
</dbReference>
<dbReference type="InterPro" id="IPR006847">
    <property type="entry name" value="IF2_N"/>
</dbReference>
<dbReference type="InterPro" id="IPR027417">
    <property type="entry name" value="P-loop_NTPase"/>
</dbReference>
<dbReference type="InterPro" id="IPR005225">
    <property type="entry name" value="Small_GTP-bd"/>
</dbReference>
<dbReference type="InterPro" id="IPR000795">
    <property type="entry name" value="T_Tr_GTP-bd_dom"/>
</dbReference>
<dbReference type="InterPro" id="IPR000178">
    <property type="entry name" value="TF_IF2_bacterial-like"/>
</dbReference>
<dbReference type="InterPro" id="IPR015760">
    <property type="entry name" value="TIF_IF2"/>
</dbReference>
<dbReference type="InterPro" id="IPR023115">
    <property type="entry name" value="TIF_IF2_dom3"/>
</dbReference>
<dbReference type="InterPro" id="IPR036925">
    <property type="entry name" value="TIF_IF2_dom3_sf"/>
</dbReference>
<dbReference type="InterPro" id="IPR009000">
    <property type="entry name" value="Transl_B-barrel_sf"/>
</dbReference>
<dbReference type="NCBIfam" id="TIGR00487">
    <property type="entry name" value="IF-2"/>
    <property type="match status" value="1"/>
</dbReference>
<dbReference type="NCBIfam" id="TIGR00231">
    <property type="entry name" value="small_GTP"/>
    <property type="match status" value="1"/>
</dbReference>
<dbReference type="PANTHER" id="PTHR43381:SF5">
    <property type="entry name" value="TR-TYPE G DOMAIN-CONTAINING PROTEIN"/>
    <property type="match status" value="1"/>
</dbReference>
<dbReference type="PANTHER" id="PTHR43381">
    <property type="entry name" value="TRANSLATION INITIATION FACTOR IF-2-RELATED"/>
    <property type="match status" value="1"/>
</dbReference>
<dbReference type="Pfam" id="PF22042">
    <property type="entry name" value="EF-G_D2"/>
    <property type="match status" value="1"/>
</dbReference>
<dbReference type="Pfam" id="PF00009">
    <property type="entry name" value="GTP_EFTU"/>
    <property type="match status" value="1"/>
</dbReference>
<dbReference type="Pfam" id="PF11987">
    <property type="entry name" value="IF-2"/>
    <property type="match status" value="1"/>
</dbReference>
<dbReference type="Pfam" id="PF04760">
    <property type="entry name" value="IF2_N"/>
    <property type="match status" value="2"/>
</dbReference>
<dbReference type="SUPFAM" id="SSF52156">
    <property type="entry name" value="Initiation factor IF2/eIF5b, domain 3"/>
    <property type="match status" value="1"/>
</dbReference>
<dbReference type="SUPFAM" id="SSF52540">
    <property type="entry name" value="P-loop containing nucleoside triphosphate hydrolases"/>
    <property type="match status" value="1"/>
</dbReference>
<dbReference type="SUPFAM" id="SSF50447">
    <property type="entry name" value="Translation proteins"/>
    <property type="match status" value="2"/>
</dbReference>
<dbReference type="PROSITE" id="PS51722">
    <property type="entry name" value="G_TR_2"/>
    <property type="match status" value="1"/>
</dbReference>
<dbReference type="PROSITE" id="PS01176">
    <property type="entry name" value="IF2"/>
    <property type="match status" value="1"/>
</dbReference>
<feature type="chain" id="PRO_0000335465" description="Translation initiation factor IF-2">
    <location>
        <begin position="1"/>
        <end position="971"/>
    </location>
</feature>
<feature type="domain" description="tr-type G">
    <location>
        <begin position="471"/>
        <end position="640"/>
    </location>
</feature>
<feature type="region of interest" description="Disordered" evidence="3">
    <location>
        <begin position="39"/>
        <end position="379"/>
    </location>
</feature>
<feature type="region of interest" description="G1" evidence="1">
    <location>
        <begin position="480"/>
        <end position="487"/>
    </location>
</feature>
<feature type="region of interest" description="G2" evidence="1">
    <location>
        <begin position="505"/>
        <end position="509"/>
    </location>
</feature>
<feature type="region of interest" description="G3" evidence="1">
    <location>
        <begin position="526"/>
        <end position="529"/>
    </location>
</feature>
<feature type="region of interest" description="G4" evidence="1">
    <location>
        <begin position="580"/>
        <end position="583"/>
    </location>
</feature>
<feature type="region of interest" description="G5" evidence="1">
    <location>
        <begin position="616"/>
        <end position="618"/>
    </location>
</feature>
<feature type="compositionally biased region" description="Basic and acidic residues" evidence="3">
    <location>
        <begin position="53"/>
        <end position="63"/>
    </location>
</feature>
<feature type="compositionally biased region" description="Polar residues" evidence="3">
    <location>
        <begin position="65"/>
        <end position="75"/>
    </location>
</feature>
<feature type="compositionally biased region" description="Low complexity" evidence="3">
    <location>
        <begin position="310"/>
        <end position="326"/>
    </location>
</feature>
<feature type="compositionally biased region" description="Basic and acidic residues" evidence="3">
    <location>
        <begin position="342"/>
        <end position="370"/>
    </location>
</feature>
<feature type="binding site" evidence="2">
    <location>
        <begin position="480"/>
        <end position="487"/>
    </location>
    <ligand>
        <name>GTP</name>
        <dbReference type="ChEBI" id="CHEBI:37565"/>
    </ligand>
</feature>
<feature type="binding site" evidence="2">
    <location>
        <begin position="526"/>
        <end position="530"/>
    </location>
    <ligand>
        <name>GTP</name>
        <dbReference type="ChEBI" id="CHEBI:37565"/>
    </ligand>
</feature>
<feature type="binding site" evidence="2">
    <location>
        <begin position="580"/>
        <end position="583"/>
    </location>
    <ligand>
        <name>GTP</name>
        <dbReference type="ChEBI" id="CHEBI:37565"/>
    </ligand>
</feature>